<name>PTH_MYCGI</name>
<keyword id="KW-0963">Cytoplasm</keyword>
<keyword id="KW-0378">Hydrolase</keyword>
<keyword id="KW-0694">RNA-binding</keyword>
<keyword id="KW-0820">tRNA-binding</keyword>
<sequence length="192" mass="20520">MAEPVLVVGLGNPGPQYATTRHNIGFMVADVLADRMGETFKVHKKSGAEVTTGRLAGRPVVLAKPRVYMNESGRQVGPLAKFYSIAPTDVVIIHDELDIDFGRIRLKAGGGVAGHNGLRSVGSALSTNDFQRVRVGIGRPPGQKSGASFVLEPFNSRERPELGTIIEQAADATELLIELGIEPAQNTVHAWS</sequence>
<feature type="chain" id="PRO_1000075347" description="Peptidyl-tRNA hydrolase">
    <location>
        <begin position="1"/>
        <end position="192"/>
    </location>
</feature>
<feature type="active site" description="Proton acceptor" evidence="1">
    <location>
        <position position="22"/>
    </location>
</feature>
<feature type="binding site" evidence="1">
    <location>
        <position position="17"/>
    </location>
    <ligand>
        <name>tRNA</name>
        <dbReference type="ChEBI" id="CHEBI:17843"/>
    </ligand>
</feature>
<feature type="binding site" evidence="1">
    <location>
        <position position="68"/>
    </location>
    <ligand>
        <name>tRNA</name>
        <dbReference type="ChEBI" id="CHEBI:17843"/>
    </ligand>
</feature>
<feature type="binding site" evidence="1">
    <location>
        <position position="70"/>
    </location>
    <ligand>
        <name>tRNA</name>
        <dbReference type="ChEBI" id="CHEBI:17843"/>
    </ligand>
</feature>
<feature type="binding site" evidence="1">
    <location>
        <position position="116"/>
    </location>
    <ligand>
        <name>tRNA</name>
        <dbReference type="ChEBI" id="CHEBI:17843"/>
    </ligand>
</feature>
<feature type="site" description="Discriminates between blocked and unblocked aminoacyl-tRNA" evidence="1">
    <location>
        <position position="12"/>
    </location>
</feature>
<feature type="site" description="Stabilizes the basic form of H active site to accept a proton" evidence="1">
    <location>
        <position position="95"/>
    </location>
</feature>
<organism>
    <name type="scientific">Mycolicibacterium gilvum (strain PYR-GCK)</name>
    <name type="common">Mycobacterium gilvum (strain PYR-GCK)</name>
    <dbReference type="NCBI Taxonomy" id="350054"/>
    <lineage>
        <taxon>Bacteria</taxon>
        <taxon>Bacillati</taxon>
        <taxon>Actinomycetota</taxon>
        <taxon>Actinomycetes</taxon>
        <taxon>Mycobacteriales</taxon>
        <taxon>Mycobacteriaceae</taxon>
        <taxon>Mycolicibacterium</taxon>
    </lineage>
</organism>
<protein>
    <recommendedName>
        <fullName evidence="1">Peptidyl-tRNA hydrolase</fullName>
        <shortName evidence="1">Pth</shortName>
        <ecNumber evidence="1">3.1.1.29</ecNumber>
    </recommendedName>
</protein>
<comment type="function">
    <text evidence="1">Hydrolyzes ribosome-free peptidyl-tRNAs (with 1 or more amino acids incorporated), which drop off the ribosome during protein synthesis, or as a result of ribosome stalling.</text>
</comment>
<comment type="function">
    <text evidence="1">Catalyzes the release of premature peptidyl moieties from peptidyl-tRNA molecules trapped in stalled 50S ribosomal subunits, and thus maintains levels of free tRNAs and 50S ribosomes.</text>
</comment>
<comment type="catalytic activity">
    <reaction evidence="1">
        <text>an N-acyl-L-alpha-aminoacyl-tRNA + H2O = an N-acyl-L-amino acid + a tRNA + H(+)</text>
        <dbReference type="Rhea" id="RHEA:54448"/>
        <dbReference type="Rhea" id="RHEA-COMP:10123"/>
        <dbReference type="Rhea" id="RHEA-COMP:13883"/>
        <dbReference type="ChEBI" id="CHEBI:15377"/>
        <dbReference type="ChEBI" id="CHEBI:15378"/>
        <dbReference type="ChEBI" id="CHEBI:59874"/>
        <dbReference type="ChEBI" id="CHEBI:78442"/>
        <dbReference type="ChEBI" id="CHEBI:138191"/>
        <dbReference type="EC" id="3.1.1.29"/>
    </reaction>
</comment>
<comment type="subunit">
    <text evidence="1">Monomer.</text>
</comment>
<comment type="subcellular location">
    <subcellularLocation>
        <location evidence="1">Cytoplasm</location>
    </subcellularLocation>
</comment>
<comment type="similarity">
    <text evidence="1">Belongs to the PTH family.</text>
</comment>
<accession>A4T6N5</accession>
<reference key="1">
    <citation type="submission" date="2007-04" db="EMBL/GenBank/DDBJ databases">
        <title>Complete sequence of chromosome of Mycobacterium gilvum PYR-GCK.</title>
        <authorList>
            <consortium name="US DOE Joint Genome Institute"/>
            <person name="Copeland A."/>
            <person name="Lucas S."/>
            <person name="Lapidus A."/>
            <person name="Barry K."/>
            <person name="Detter J.C."/>
            <person name="Glavina del Rio T."/>
            <person name="Hammon N."/>
            <person name="Israni S."/>
            <person name="Dalin E."/>
            <person name="Tice H."/>
            <person name="Pitluck S."/>
            <person name="Chain P."/>
            <person name="Malfatti S."/>
            <person name="Shin M."/>
            <person name="Vergez L."/>
            <person name="Schmutz J."/>
            <person name="Larimer F."/>
            <person name="Land M."/>
            <person name="Hauser L."/>
            <person name="Kyrpides N."/>
            <person name="Mikhailova N."/>
            <person name="Miller C."/>
            <person name="Richardson P."/>
        </authorList>
    </citation>
    <scope>NUCLEOTIDE SEQUENCE [LARGE SCALE GENOMIC DNA]</scope>
    <source>
        <strain>PYR-GCK</strain>
    </source>
</reference>
<evidence type="ECO:0000255" key="1">
    <source>
        <dbReference type="HAMAP-Rule" id="MF_00083"/>
    </source>
</evidence>
<dbReference type="EC" id="3.1.1.29" evidence="1"/>
<dbReference type="EMBL" id="CP000656">
    <property type="protein sequence ID" value="ABP44418.1"/>
    <property type="molecule type" value="Genomic_DNA"/>
</dbReference>
<dbReference type="SMR" id="A4T6N5"/>
<dbReference type="STRING" id="350054.Mflv_1938"/>
<dbReference type="KEGG" id="mgi:Mflv_1938"/>
<dbReference type="eggNOG" id="COG0193">
    <property type="taxonomic scope" value="Bacteria"/>
</dbReference>
<dbReference type="HOGENOM" id="CLU_062456_2_2_11"/>
<dbReference type="OrthoDB" id="9800507at2"/>
<dbReference type="GO" id="GO:0005737">
    <property type="term" value="C:cytoplasm"/>
    <property type="evidence" value="ECO:0007669"/>
    <property type="project" value="UniProtKB-SubCell"/>
</dbReference>
<dbReference type="GO" id="GO:0004045">
    <property type="term" value="F:peptidyl-tRNA hydrolase activity"/>
    <property type="evidence" value="ECO:0007669"/>
    <property type="project" value="UniProtKB-UniRule"/>
</dbReference>
<dbReference type="GO" id="GO:0000049">
    <property type="term" value="F:tRNA binding"/>
    <property type="evidence" value="ECO:0007669"/>
    <property type="project" value="UniProtKB-UniRule"/>
</dbReference>
<dbReference type="GO" id="GO:0006515">
    <property type="term" value="P:protein quality control for misfolded or incompletely synthesized proteins"/>
    <property type="evidence" value="ECO:0007669"/>
    <property type="project" value="UniProtKB-UniRule"/>
</dbReference>
<dbReference type="GO" id="GO:0072344">
    <property type="term" value="P:rescue of stalled ribosome"/>
    <property type="evidence" value="ECO:0007669"/>
    <property type="project" value="UniProtKB-UniRule"/>
</dbReference>
<dbReference type="CDD" id="cd00462">
    <property type="entry name" value="PTH"/>
    <property type="match status" value="1"/>
</dbReference>
<dbReference type="FunFam" id="3.40.50.1470:FF:000001">
    <property type="entry name" value="Peptidyl-tRNA hydrolase"/>
    <property type="match status" value="1"/>
</dbReference>
<dbReference type="Gene3D" id="3.40.50.1470">
    <property type="entry name" value="Peptidyl-tRNA hydrolase"/>
    <property type="match status" value="1"/>
</dbReference>
<dbReference type="HAMAP" id="MF_00083">
    <property type="entry name" value="Pept_tRNA_hydro_bact"/>
    <property type="match status" value="1"/>
</dbReference>
<dbReference type="InterPro" id="IPR001328">
    <property type="entry name" value="Pept_tRNA_hydro"/>
</dbReference>
<dbReference type="InterPro" id="IPR018171">
    <property type="entry name" value="Pept_tRNA_hydro_CS"/>
</dbReference>
<dbReference type="InterPro" id="IPR036416">
    <property type="entry name" value="Pept_tRNA_hydro_sf"/>
</dbReference>
<dbReference type="NCBIfam" id="TIGR00447">
    <property type="entry name" value="pth"/>
    <property type="match status" value="1"/>
</dbReference>
<dbReference type="PANTHER" id="PTHR17224">
    <property type="entry name" value="PEPTIDYL-TRNA HYDROLASE"/>
    <property type="match status" value="1"/>
</dbReference>
<dbReference type="PANTHER" id="PTHR17224:SF1">
    <property type="entry name" value="PEPTIDYL-TRNA HYDROLASE"/>
    <property type="match status" value="1"/>
</dbReference>
<dbReference type="Pfam" id="PF01195">
    <property type="entry name" value="Pept_tRNA_hydro"/>
    <property type="match status" value="1"/>
</dbReference>
<dbReference type="SUPFAM" id="SSF53178">
    <property type="entry name" value="Peptidyl-tRNA hydrolase-like"/>
    <property type="match status" value="1"/>
</dbReference>
<dbReference type="PROSITE" id="PS01195">
    <property type="entry name" value="PEPT_TRNA_HYDROL_1"/>
    <property type="match status" value="1"/>
</dbReference>
<dbReference type="PROSITE" id="PS01196">
    <property type="entry name" value="PEPT_TRNA_HYDROL_2"/>
    <property type="match status" value="1"/>
</dbReference>
<gene>
    <name evidence="1" type="primary">pth</name>
    <name type="ordered locus">Mflv_1938</name>
</gene>
<proteinExistence type="inferred from homology"/>